<comment type="function">
    <text evidence="1">Seems to function only as a co-chaperone, along with cpn60, and in certain cases is essential for the discharge of biologically active proteins from cpn60.</text>
</comment>
<comment type="subunit">
    <text evidence="2">Forms stable complexes with cpn60 in the presence of ATP. Homotetramer (By similarity).</text>
</comment>
<comment type="subcellular location">
    <subcellularLocation>
        <location evidence="1">Plastid</location>
        <location evidence="1">Chloroplast</location>
    </subcellularLocation>
</comment>
<comment type="similarity">
    <text evidence="6">Belongs to the GroES chaperonin family.</text>
</comment>
<keyword id="KW-0143">Chaperone</keyword>
<keyword id="KW-0150">Chloroplast</keyword>
<keyword id="KW-0903">Direct protein sequencing</keyword>
<keyword id="KW-0934">Plastid</keyword>
<keyword id="KW-1185">Reference proteome</keyword>
<keyword id="KW-0677">Repeat</keyword>
<protein>
    <recommendedName>
        <fullName>20 kDa chaperonin</fullName>
    </recommendedName>
    <alternativeName>
        <fullName>Chloroplast chaperonin 10</fullName>
        <shortName>Ch-Cpn10</shortName>
        <shortName>Chloroplast Cpn10</shortName>
    </alternativeName>
    <alternativeName>
        <fullName>Protein Cpn21</fullName>
    </alternativeName>
</protein>
<name>CH10C_POPEU</name>
<feature type="chain" id="PRO_0000174926" description="20 kDa chaperonin">
    <location>
        <begin position="1" status="less than"/>
        <end position="53" status="greater than"/>
    </location>
</feature>
<feature type="region of interest" description="Cpn-10 domain 1" evidence="2">
    <location>
        <begin position="1" status="less than"/>
        <end position="10" status="greater than"/>
    </location>
</feature>
<feature type="region of interest" description="Cpn-10 domain 2" evidence="2">
    <location>
        <begin position="11" status="less than"/>
        <end position="53" status="greater than"/>
    </location>
</feature>
<feature type="sequence conflict" description="In Ref. 2; AA sequence." evidence="6" ref="2">
    <original>S</original>
    <variation>P</variation>
    <location>
        <position position="44"/>
    </location>
</feature>
<feature type="sequence conflict" description="In Ref. 2; AA sequence." evidence="6" ref="2">
    <original>KIT</original>
    <variation>NRK</variation>
    <location>
        <begin position="50"/>
        <end position="52"/>
    </location>
</feature>
<feature type="non-consecutive residues" evidence="5">
    <location>
        <begin position="10"/>
        <end position="11"/>
    </location>
</feature>
<feature type="non-terminal residue" evidence="5">
    <location>
        <position position="1"/>
    </location>
</feature>
<feature type="non-terminal residue" evidence="5">
    <location>
        <position position="53"/>
    </location>
</feature>
<reference evidence="6" key="1">
    <citation type="journal article" date="2006" name="Ann. Bot.">
        <title>Proteome profiling of Populus euphratica Oliv. upon heat stress.</title>
        <authorList>
            <person name="Ferreira S."/>
            <person name="Hjernoe K."/>
            <person name="Larsen M."/>
            <person name="Wingsle G."/>
            <person name="Larsen P."/>
            <person name="Fey S."/>
            <person name="Roepstorff P."/>
            <person name="Pais M.S."/>
        </authorList>
    </citation>
    <scope>PROTEIN SEQUENCE</scope>
    <source>
        <tissue evidence="3">Leaf</tissue>
    </source>
</reference>
<reference evidence="6" key="2">
    <citation type="thesis" date="2006" institute="ICAT-FCUL" country="Portugal">
        <title>Molecular analysis of Populus euphratica Oliv. response to moderate heat stress.</title>
        <authorList>
            <person name="Ferreira S."/>
        </authorList>
    </citation>
    <scope>PROTEIN SEQUENCE OF 30-52</scope>
    <source>
        <tissue evidence="4">Leaf</tissue>
    </source>
</reference>
<dbReference type="Proteomes" id="UP000694918">
    <property type="component" value="Unplaced"/>
</dbReference>
<dbReference type="GO" id="GO:0009507">
    <property type="term" value="C:chloroplast"/>
    <property type="evidence" value="ECO:0007669"/>
    <property type="project" value="UniProtKB-SubCell"/>
</dbReference>
<dbReference type="GO" id="GO:0005739">
    <property type="term" value="C:mitochondrion"/>
    <property type="evidence" value="ECO:0007669"/>
    <property type="project" value="TreeGrafter"/>
</dbReference>
<dbReference type="GO" id="GO:0005524">
    <property type="term" value="F:ATP binding"/>
    <property type="evidence" value="ECO:0007669"/>
    <property type="project" value="InterPro"/>
</dbReference>
<dbReference type="GO" id="GO:0046872">
    <property type="term" value="F:metal ion binding"/>
    <property type="evidence" value="ECO:0007669"/>
    <property type="project" value="TreeGrafter"/>
</dbReference>
<dbReference type="GO" id="GO:0044183">
    <property type="term" value="F:protein folding chaperone"/>
    <property type="evidence" value="ECO:0007669"/>
    <property type="project" value="InterPro"/>
</dbReference>
<dbReference type="GO" id="GO:0051087">
    <property type="term" value="F:protein-folding chaperone binding"/>
    <property type="evidence" value="ECO:0007669"/>
    <property type="project" value="TreeGrafter"/>
</dbReference>
<dbReference type="GO" id="GO:0051082">
    <property type="term" value="F:unfolded protein binding"/>
    <property type="evidence" value="ECO:0007669"/>
    <property type="project" value="TreeGrafter"/>
</dbReference>
<dbReference type="GO" id="GO:0051085">
    <property type="term" value="P:chaperone cofactor-dependent protein refolding"/>
    <property type="evidence" value="ECO:0007669"/>
    <property type="project" value="TreeGrafter"/>
</dbReference>
<dbReference type="CDD" id="cd00320">
    <property type="entry name" value="cpn10"/>
    <property type="match status" value="1"/>
</dbReference>
<dbReference type="Gene3D" id="2.30.33.40">
    <property type="entry name" value="GroES chaperonin"/>
    <property type="match status" value="1"/>
</dbReference>
<dbReference type="InterPro" id="IPR020818">
    <property type="entry name" value="Chaperonin_GroES"/>
</dbReference>
<dbReference type="InterPro" id="IPR037124">
    <property type="entry name" value="Chaperonin_GroES_sf"/>
</dbReference>
<dbReference type="InterPro" id="IPR011032">
    <property type="entry name" value="GroES-like_sf"/>
</dbReference>
<dbReference type="PANTHER" id="PTHR10772">
    <property type="entry name" value="10 KDA HEAT SHOCK PROTEIN"/>
    <property type="match status" value="1"/>
</dbReference>
<dbReference type="PANTHER" id="PTHR10772:SF63">
    <property type="entry name" value="20 KDA CHAPERONIN, CHLOROPLASTIC"/>
    <property type="match status" value="1"/>
</dbReference>
<dbReference type="Pfam" id="PF00166">
    <property type="entry name" value="Cpn10"/>
    <property type="match status" value="1"/>
</dbReference>
<dbReference type="PRINTS" id="PR00297">
    <property type="entry name" value="CHAPERONIN10"/>
</dbReference>
<dbReference type="SMART" id="SM00883">
    <property type="entry name" value="Cpn10"/>
    <property type="match status" value="1"/>
</dbReference>
<dbReference type="SUPFAM" id="SSF50129">
    <property type="entry name" value="GroES-like"/>
    <property type="match status" value="1"/>
</dbReference>
<proteinExistence type="evidence at protein level"/>
<evidence type="ECO:0000250" key="1"/>
<evidence type="ECO:0000250" key="2">
    <source>
        <dbReference type="UniProtKB" id="O65282"/>
    </source>
</evidence>
<evidence type="ECO:0000269" key="3">
    <source>
    </source>
</evidence>
<evidence type="ECO:0000269" key="4">
    <source ref="2"/>
</evidence>
<evidence type="ECO:0000303" key="5">
    <source>
    </source>
</evidence>
<evidence type="ECO:0000305" key="6"/>
<sequence>YTSIKPLGDRVAEAEEKTAGGLLLTETTKEKPSIGTVIAVGPGSLDEEGKITP</sequence>
<accession>P84579</accession>
<organism>
    <name type="scientific">Populus euphratica</name>
    <name type="common">Euphrates poplar</name>
    <dbReference type="NCBI Taxonomy" id="75702"/>
    <lineage>
        <taxon>Eukaryota</taxon>
        <taxon>Viridiplantae</taxon>
        <taxon>Streptophyta</taxon>
        <taxon>Embryophyta</taxon>
        <taxon>Tracheophyta</taxon>
        <taxon>Spermatophyta</taxon>
        <taxon>Magnoliopsida</taxon>
        <taxon>eudicotyledons</taxon>
        <taxon>Gunneridae</taxon>
        <taxon>Pentapetalae</taxon>
        <taxon>rosids</taxon>
        <taxon>fabids</taxon>
        <taxon>Malpighiales</taxon>
        <taxon>Salicaceae</taxon>
        <taxon>Saliceae</taxon>
        <taxon>Populus</taxon>
    </lineage>
</organism>